<dbReference type="EC" id="3.6.5.-"/>
<dbReference type="EMBL" id="CM000131">
    <property type="protein sequence ID" value="EEC79977.1"/>
    <property type="molecule type" value="Genomic_DNA"/>
</dbReference>
<dbReference type="SMR" id="B8B2R1"/>
<dbReference type="STRING" id="39946.B8B2R1"/>
<dbReference type="EnsemblPlants" id="BGIOSGA022282-TA">
    <property type="protein sequence ID" value="BGIOSGA022282-PA"/>
    <property type="gene ID" value="BGIOSGA022282"/>
</dbReference>
<dbReference type="Gramene" id="BGIOSGA022282-TA">
    <property type="protein sequence ID" value="BGIOSGA022282-PA"/>
    <property type="gene ID" value="BGIOSGA022282"/>
</dbReference>
<dbReference type="HOGENOM" id="CLU_009995_3_3_1"/>
<dbReference type="OMA" id="HADVFHQ"/>
<dbReference type="Proteomes" id="UP000007015">
    <property type="component" value="Chromosome 6"/>
</dbReference>
<dbReference type="GO" id="GO:0005743">
    <property type="term" value="C:mitochondrial inner membrane"/>
    <property type="evidence" value="ECO:0007669"/>
    <property type="project" value="UniProtKB-SubCell"/>
</dbReference>
<dbReference type="GO" id="GO:0005759">
    <property type="term" value="C:mitochondrial matrix"/>
    <property type="evidence" value="ECO:0007669"/>
    <property type="project" value="UniProtKB-UniRule"/>
</dbReference>
<dbReference type="GO" id="GO:0005525">
    <property type="term" value="F:GTP binding"/>
    <property type="evidence" value="ECO:0007669"/>
    <property type="project" value="UniProtKB-UniRule"/>
</dbReference>
<dbReference type="GO" id="GO:0003924">
    <property type="term" value="F:GTPase activity"/>
    <property type="evidence" value="ECO:0007669"/>
    <property type="project" value="UniProtKB-UniRule"/>
</dbReference>
<dbReference type="GO" id="GO:0097177">
    <property type="term" value="F:mitochondrial ribosome binding"/>
    <property type="evidence" value="ECO:0007669"/>
    <property type="project" value="TreeGrafter"/>
</dbReference>
<dbReference type="GO" id="GO:0045727">
    <property type="term" value="P:positive regulation of translation"/>
    <property type="evidence" value="ECO:0007669"/>
    <property type="project" value="UniProtKB-UniRule"/>
</dbReference>
<dbReference type="GO" id="GO:0006412">
    <property type="term" value="P:translation"/>
    <property type="evidence" value="ECO:0007669"/>
    <property type="project" value="UniProtKB-KW"/>
</dbReference>
<dbReference type="CDD" id="cd03699">
    <property type="entry name" value="EF4_II"/>
    <property type="match status" value="1"/>
</dbReference>
<dbReference type="CDD" id="cd16260">
    <property type="entry name" value="EF4_III"/>
    <property type="match status" value="1"/>
</dbReference>
<dbReference type="CDD" id="cd01890">
    <property type="entry name" value="LepA"/>
    <property type="match status" value="1"/>
</dbReference>
<dbReference type="FunFam" id="3.40.50.300:FF:000078">
    <property type="entry name" value="Elongation factor 4"/>
    <property type="match status" value="1"/>
</dbReference>
<dbReference type="FunFam" id="2.40.30.10:FF:000015">
    <property type="entry name" value="Translation factor GUF1, mitochondrial"/>
    <property type="match status" value="1"/>
</dbReference>
<dbReference type="FunFam" id="3.30.70.2570:FF:000001">
    <property type="entry name" value="Translation factor GUF1, mitochondrial"/>
    <property type="match status" value="1"/>
</dbReference>
<dbReference type="FunFam" id="3.30.70.870:FF:000004">
    <property type="entry name" value="Translation factor GUF1, mitochondrial"/>
    <property type="match status" value="1"/>
</dbReference>
<dbReference type="Gene3D" id="3.30.70.240">
    <property type="match status" value="1"/>
</dbReference>
<dbReference type="Gene3D" id="3.30.70.2570">
    <property type="entry name" value="Elongation factor 4, C-terminal domain"/>
    <property type="match status" value="1"/>
</dbReference>
<dbReference type="Gene3D" id="3.30.70.870">
    <property type="entry name" value="Elongation Factor G (Translational Gtpase), domain 3"/>
    <property type="match status" value="1"/>
</dbReference>
<dbReference type="Gene3D" id="3.40.50.300">
    <property type="entry name" value="P-loop containing nucleotide triphosphate hydrolases"/>
    <property type="match status" value="1"/>
</dbReference>
<dbReference type="Gene3D" id="2.40.30.10">
    <property type="entry name" value="Translation factors"/>
    <property type="match status" value="1"/>
</dbReference>
<dbReference type="HAMAP" id="MF_00071">
    <property type="entry name" value="LepA"/>
    <property type="match status" value="1"/>
</dbReference>
<dbReference type="InterPro" id="IPR006297">
    <property type="entry name" value="EF-4"/>
</dbReference>
<dbReference type="InterPro" id="IPR035647">
    <property type="entry name" value="EFG_III/V"/>
</dbReference>
<dbReference type="InterPro" id="IPR000640">
    <property type="entry name" value="EFG_V-like"/>
</dbReference>
<dbReference type="InterPro" id="IPR004161">
    <property type="entry name" value="EFTu-like_2"/>
</dbReference>
<dbReference type="InterPro" id="IPR031157">
    <property type="entry name" value="G_TR_CS"/>
</dbReference>
<dbReference type="InterPro" id="IPR038363">
    <property type="entry name" value="LepA_C_sf"/>
</dbReference>
<dbReference type="InterPro" id="IPR013842">
    <property type="entry name" value="LepA_CTD"/>
</dbReference>
<dbReference type="InterPro" id="IPR027417">
    <property type="entry name" value="P-loop_NTPase"/>
</dbReference>
<dbReference type="InterPro" id="IPR005225">
    <property type="entry name" value="Small_GTP-bd"/>
</dbReference>
<dbReference type="InterPro" id="IPR000795">
    <property type="entry name" value="T_Tr_GTP-bd_dom"/>
</dbReference>
<dbReference type="InterPro" id="IPR009000">
    <property type="entry name" value="Transl_B-barrel_sf"/>
</dbReference>
<dbReference type="NCBIfam" id="TIGR01393">
    <property type="entry name" value="lepA"/>
    <property type="match status" value="1"/>
</dbReference>
<dbReference type="NCBIfam" id="TIGR00231">
    <property type="entry name" value="small_GTP"/>
    <property type="match status" value="1"/>
</dbReference>
<dbReference type="PANTHER" id="PTHR43512:SF7">
    <property type="entry name" value="TRANSLATION FACTOR GUF1, MITOCHONDRIAL"/>
    <property type="match status" value="1"/>
</dbReference>
<dbReference type="PANTHER" id="PTHR43512">
    <property type="entry name" value="TRANSLATION FACTOR GUF1-RELATED"/>
    <property type="match status" value="1"/>
</dbReference>
<dbReference type="Pfam" id="PF00679">
    <property type="entry name" value="EFG_C"/>
    <property type="match status" value="1"/>
</dbReference>
<dbReference type="Pfam" id="PF00009">
    <property type="entry name" value="GTP_EFTU"/>
    <property type="match status" value="1"/>
</dbReference>
<dbReference type="Pfam" id="PF03144">
    <property type="entry name" value="GTP_EFTU_D2"/>
    <property type="match status" value="1"/>
</dbReference>
<dbReference type="Pfam" id="PF06421">
    <property type="entry name" value="LepA_C"/>
    <property type="match status" value="1"/>
</dbReference>
<dbReference type="PRINTS" id="PR00315">
    <property type="entry name" value="ELONGATNFCT"/>
</dbReference>
<dbReference type="SUPFAM" id="SSF54980">
    <property type="entry name" value="EF-G C-terminal domain-like"/>
    <property type="match status" value="2"/>
</dbReference>
<dbReference type="SUPFAM" id="SSF52540">
    <property type="entry name" value="P-loop containing nucleoside triphosphate hydrolases"/>
    <property type="match status" value="1"/>
</dbReference>
<dbReference type="SUPFAM" id="SSF50447">
    <property type="entry name" value="Translation proteins"/>
    <property type="match status" value="1"/>
</dbReference>
<dbReference type="PROSITE" id="PS00301">
    <property type="entry name" value="G_TR_1"/>
    <property type="match status" value="1"/>
</dbReference>
<dbReference type="PROSITE" id="PS51722">
    <property type="entry name" value="G_TR_2"/>
    <property type="match status" value="1"/>
</dbReference>
<protein>
    <recommendedName>
        <fullName evidence="1">Translation factor GUF1 homolog, mitochondrial</fullName>
        <ecNumber>3.6.5.-</ecNumber>
    </recommendedName>
    <alternativeName>
        <fullName evidence="1">Elongation factor 4 homolog</fullName>
        <shortName evidence="1">EF-4</shortName>
    </alternativeName>
    <alternativeName>
        <fullName evidence="1">GTPase GUF1 homolog</fullName>
    </alternativeName>
    <alternativeName>
        <fullName evidence="1">Ribosomal back-translocase</fullName>
    </alternativeName>
</protein>
<sequence length="648" mass="71284">MAGAAALRRSARRVVRPGAYALSRALQHPERLLSSQASPDRGGVLGSELGRYPPERVRNFSIIAHVDHGKSTLADRLLELTGTIKKGHGQPQYLDKLQVERERGITVKAQTATMFYRHANNQLPASDQPDAPSYLLNLIDTPGHVDFSYEVSRSLAACQGALLVVDAAQGVQAQTIANFYLAFESNLSIIPVINKIDQPTADPDNVKAQLKRLFDIDPSEALLTSAKTGQGLSQVLPAVIERIPSPPGKCDSPVRMLLLDSYYDEYKGVICHVAVVDGALHKGDKIASAATGRTYEVLDVGIMHPELTPTGVLYTGQVGYVISGMRSTKEARIGDTLHQAKSIVEPLPGFKPARHMVFSGLYPADGSDFDALSHAIEKLTCNDASVSVTKETSTALGMGFRCGFLGLLHMDVFHQRLEQEHGAQVISTIPTVPYIFEYGDGSKVQVENPAALASNPGKRIAACWEPTVIATIIIPKVLRLPNRFFSQRALLKYRLPLREIIVDFYNELKSITSGYATFDYEDSEYQQSDLVKMDILLNGQPVDAMATIVHNQKAQRVGRELVDKLKKFIERQMFEITIQAAVGSKVIARETLSAMRKNVLAKCYGGDITRKKKLLEKQKEGKKRMKRVGSVDIPQEAFHELLKVSNSK</sequence>
<feature type="chain" id="PRO_0000402844" description="Translation factor GUF1 homolog, mitochondrial">
    <location>
        <begin position="1"/>
        <end position="648"/>
    </location>
</feature>
<feature type="domain" description="tr-type G">
    <location>
        <begin position="55"/>
        <end position="247"/>
    </location>
</feature>
<feature type="binding site" evidence="1">
    <location>
        <begin position="64"/>
        <end position="71"/>
    </location>
    <ligand>
        <name>GTP</name>
        <dbReference type="ChEBI" id="CHEBI:37565"/>
    </ligand>
</feature>
<feature type="binding site" evidence="1">
    <location>
        <begin position="140"/>
        <end position="144"/>
    </location>
    <ligand>
        <name>GTP</name>
        <dbReference type="ChEBI" id="CHEBI:37565"/>
    </ligand>
</feature>
<feature type="binding site" evidence="1">
    <location>
        <begin position="194"/>
        <end position="197"/>
    </location>
    <ligand>
        <name>GTP</name>
        <dbReference type="ChEBI" id="CHEBI:37565"/>
    </ligand>
</feature>
<accession>B8B2R1</accession>
<evidence type="ECO:0000255" key="1">
    <source>
        <dbReference type="HAMAP-Rule" id="MF_03137"/>
    </source>
</evidence>
<evidence type="ECO:0000305" key="2"/>
<gene>
    <name type="ORF">OsI_21607</name>
</gene>
<proteinExistence type="inferred from homology"/>
<name>GUF1_ORYSI</name>
<reference key="1">
    <citation type="journal article" date="2005" name="PLoS Biol.">
        <title>The genomes of Oryza sativa: a history of duplications.</title>
        <authorList>
            <person name="Yu J."/>
            <person name="Wang J."/>
            <person name="Lin W."/>
            <person name="Li S."/>
            <person name="Li H."/>
            <person name="Zhou J."/>
            <person name="Ni P."/>
            <person name="Dong W."/>
            <person name="Hu S."/>
            <person name="Zeng C."/>
            <person name="Zhang J."/>
            <person name="Zhang Y."/>
            <person name="Li R."/>
            <person name="Xu Z."/>
            <person name="Li S."/>
            <person name="Li X."/>
            <person name="Zheng H."/>
            <person name="Cong L."/>
            <person name="Lin L."/>
            <person name="Yin J."/>
            <person name="Geng J."/>
            <person name="Li G."/>
            <person name="Shi J."/>
            <person name="Liu J."/>
            <person name="Lv H."/>
            <person name="Li J."/>
            <person name="Wang J."/>
            <person name="Deng Y."/>
            <person name="Ran L."/>
            <person name="Shi X."/>
            <person name="Wang X."/>
            <person name="Wu Q."/>
            <person name="Li C."/>
            <person name="Ren X."/>
            <person name="Wang J."/>
            <person name="Wang X."/>
            <person name="Li D."/>
            <person name="Liu D."/>
            <person name="Zhang X."/>
            <person name="Ji Z."/>
            <person name="Zhao W."/>
            <person name="Sun Y."/>
            <person name="Zhang Z."/>
            <person name="Bao J."/>
            <person name="Han Y."/>
            <person name="Dong L."/>
            <person name="Ji J."/>
            <person name="Chen P."/>
            <person name="Wu S."/>
            <person name="Liu J."/>
            <person name="Xiao Y."/>
            <person name="Bu D."/>
            <person name="Tan J."/>
            <person name="Yang L."/>
            <person name="Ye C."/>
            <person name="Zhang J."/>
            <person name="Xu J."/>
            <person name="Zhou Y."/>
            <person name="Yu Y."/>
            <person name="Zhang B."/>
            <person name="Zhuang S."/>
            <person name="Wei H."/>
            <person name="Liu B."/>
            <person name="Lei M."/>
            <person name="Yu H."/>
            <person name="Li Y."/>
            <person name="Xu H."/>
            <person name="Wei S."/>
            <person name="He X."/>
            <person name="Fang L."/>
            <person name="Zhang Z."/>
            <person name="Zhang Y."/>
            <person name="Huang X."/>
            <person name="Su Z."/>
            <person name="Tong W."/>
            <person name="Li J."/>
            <person name="Tong Z."/>
            <person name="Li S."/>
            <person name="Ye J."/>
            <person name="Wang L."/>
            <person name="Fang L."/>
            <person name="Lei T."/>
            <person name="Chen C.-S."/>
            <person name="Chen H.-C."/>
            <person name="Xu Z."/>
            <person name="Li H."/>
            <person name="Huang H."/>
            <person name="Zhang F."/>
            <person name="Xu H."/>
            <person name="Li N."/>
            <person name="Zhao C."/>
            <person name="Li S."/>
            <person name="Dong L."/>
            <person name="Huang Y."/>
            <person name="Li L."/>
            <person name="Xi Y."/>
            <person name="Qi Q."/>
            <person name="Li W."/>
            <person name="Zhang B."/>
            <person name="Hu W."/>
            <person name="Zhang Y."/>
            <person name="Tian X."/>
            <person name="Jiao Y."/>
            <person name="Liang X."/>
            <person name="Jin J."/>
            <person name="Gao L."/>
            <person name="Zheng W."/>
            <person name="Hao B."/>
            <person name="Liu S.-M."/>
            <person name="Wang W."/>
            <person name="Yuan L."/>
            <person name="Cao M."/>
            <person name="McDermott J."/>
            <person name="Samudrala R."/>
            <person name="Wang J."/>
            <person name="Wong G.K.-S."/>
            <person name="Yang H."/>
        </authorList>
    </citation>
    <scope>NUCLEOTIDE SEQUENCE [LARGE SCALE GENOMIC DNA]</scope>
    <source>
        <strain>cv. 93-11</strain>
    </source>
</reference>
<organism>
    <name type="scientific">Oryza sativa subsp. indica</name>
    <name type="common">Rice</name>
    <dbReference type="NCBI Taxonomy" id="39946"/>
    <lineage>
        <taxon>Eukaryota</taxon>
        <taxon>Viridiplantae</taxon>
        <taxon>Streptophyta</taxon>
        <taxon>Embryophyta</taxon>
        <taxon>Tracheophyta</taxon>
        <taxon>Spermatophyta</taxon>
        <taxon>Magnoliopsida</taxon>
        <taxon>Liliopsida</taxon>
        <taxon>Poales</taxon>
        <taxon>Poaceae</taxon>
        <taxon>BOP clade</taxon>
        <taxon>Oryzoideae</taxon>
        <taxon>Oryzeae</taxon>
        <taxon>Oryzinae</taxon>
        <taxon>Oryza</taxon>
        <taxon>Oryza sativa</taxon>
    </lineage>
</organism>
<keyword id="KW-0342">GTP-binding</keyword>
<keyword id="KW-0378">Hydrolase</keyword>
<keyword id="KW-0472">Membrane</keyword>
<keyword id="KW-0496">Mitochondrion</keyword>
<keyword id="KW-0999">Mitochondrion inner membrane</keyword>
<keyword id="KW-0547">Nucleotide-binding</keyword>
<keyword id="KW-0648">Protein biosynthesis</keyword>
<keyword id="KW-1185">Reference proteome</keyword>
<comment type="function">
    <text evidence="1">Promotes mitochondrial protein synthesis. May act as a fidelity factor of the translation reaction, by catalyzing a one-codon backward translocation of tRNAs on improperly translocated ribosomes. Binds to mitochondrial ribosomes in a GTP-dependent manner.</text>
</comment>
<comment type="catalytic activity">
    <reaction evidence="1">
        <text>GTP + H2O = GDP + phosphate + H(+)</text>
        <dbReference type="Rhea" id="RHEA:19669"/>
        <dbReference type="ChEBI" id="CHEBI:15377"/>
        <dbReference type="ChEBI" id="CHEBI:15378"/>
        <dbReference type="ChEBI" id="CHEBI:37565"/>
        <dbReference type="ChEBI" id="CHEBI:43474"/>
        <dbReference type="ChEBI" id="CHEBI:58189"/>
    </reaction>
</comment>
<comment type="subcellular location">
    <subcellularLocation>
        <location evidence="1">Mitochondrion inner membrane</location>
        <topology evidence="1">Peripheral membrane protein</topology>
        <orientation evidence="1">Matrix side</orientation>
    </subcellularLocation>
</comment>
<comment type="miscellaneous">
    <text evidence="1">This protein may be expected to contain an N-terminal transit peptide but none has been predicted.</text>
</comment>
<comment type="similarity">
    <text evidence="2">Belongs to the TRAFAC class translation factor GTPase superfamily. Classic translation factor GTPase family. LepA subfamily.</text>
</comment>